<organism>
    <name type="scientific">Gallus gallus</name>
    <name type="common">Chicken</name>
    <dbReference type="NCBI Taxonomy" id="9031"/>
    <lineage>
        <taxon>Eukaryota</taxon>
        <taxon>Metazoa</taxon>
        <taxon>Chordata</taxon>
        <taxon>Craniata</taxon>
        <taxon>Vertebrata</taxon>
        <taxon>Euteleostomi</taxon>
        <taxon>Archelosauria</taxon>
        <taxon>Archosauria</taxon>
        <taxon>Dinosauria</taxon>
        <taxon>Saurischia</taxon>
        <taxon>Theropoda</taxon>
        <taxon>Coelurosauria</taxon>
        <taxon>Aves</taxon>
        <taxon>Neognathae</taxon>
        <taxon>Galloanserae</taxon>
        <taxon>Galliformes</taxon>
        <taxon>Phasianidae</taxon>
        <taxon>Phasianinae</taxon>
        <taxon>Gallus</taxon>
    </lineage>
</organism>
<sequence length="361" mass="40158">MDSRKLGELRAFVRLCKQNPGLLHTEELGFLREWVESMGGTIPPAPASTSTDETSKGKAEEQPEEPVKSPEPESEESDLEIDNEGVIEPDNDDPQEMGDENVEVTEEMMDQANEKKMEAINALSEGDLQKAVNLFTDAIKLNPCLAILYAKRASVFVKLQKPNAAIRDCDRAIKINPDSAQTYKWRGKAHRLLGHWEEAAHDLALACKLDYDEDASAMLKEVQPRAQKIAEHRRKYERKREEKEIKERMERVKKAREEHERAQREEEARRQAGGAQFGGFPGGFPGGFPGAMPGGMPGMAGMPGLNEILSDPEVLAAMQDPEVMAAFQDVAQNPANMSKYQNNPKVMSLITKLSAKFGSKP</sequence>
<gene>
    <name type="primary">ST13</name>
    <name type="synonym">FAM10A1</name>
    <name type="ORF">RCJMB04_6h13</name>
</gene>
<protein>
    <recommendedName>
        <fullName>Hsc70-interacting protein</fullName>
        <shortName>Hip</shortName>
    </recommendedName>
    <alternativeName>
        <fullName>Protein FAM10A1</fullName>
    </alternativeName>
    <alternativeName>
        <fullName>Protein ST13 homolog</fullName>
    </alternativeName>
</protein>
<keyword id="KW-0143">Chaperone</keyword>
<keyword id="KW-0963">Cytoplasm</keyword>
<keyword id="KW-1185">Reference proteome</keyword>
<keyword id="KW-0677">Repeat</keyword>
<keyword id="KW-0802">TPR repeat</keyword>
<name>F10A1_CHICK</name>
<feature type="chain" id="PRO_0000190815" description="Hsc70-interacting protein">
    <location>
        <begin position="1"/>
        <end position="361"/>
    </location>
</feature>
<feature type="repeat" description="TPR 1">
    <location>
        <begin position="112"/>
        <end position="145"/>
    </location>
</feature>
<feature type="repeat" description="TPR 2">
    <location>
        <begin position="147"/>
        <end position="179"/>
    </location>
</feature>
<feature type="repeat" description="TPR 3">
    <location>
        <begin position="181"/>
        <end position="213"/>
    </location>
</feature>
<feature type="domain" description="STI1">
    <location>
        <begin position="311"/>
        <end position="350"/>
    </location>
</feature>
<feature type="region of interest" description="Disordered" evidence="2">
    <location>
        <begin position="39"/>
        <end position="98"/>
    </location>
</feature>
<feature type="region of interest" description="Disordered" evidence="2">
    <location>
        <begin position="254"/>
        <end position="292"/>
    </location>
</feature>
<feature type="compositionally biased region" description="Basic and acidic residues" evidence="2">
    <location>
        <begin position="53"/>
        <end position="71"/>
    </location>
</feature>
<feature type="compositionally biased region" description="Acidic residues" evidence="2">
    <location>
        <begin position="72"/>
        <end position="98"/>
    </location>
</feature>
<feature type="compositionally biased region" description="Basic and acidic residues" evidence="2">
    <location>
        <begin position="254"/>
        <end position="270"/>
    </location>
</feature>
<feature type="compositionally biased region" description="Gly residues" evidence="2">
    <location>
        <begin position="275"/>
        <end position="292"/>
    </location>
</feature>
<accession>Q5ZLF0</accession>
<proteinExistence type="evidence at transcript level"/>
<reference key="1">
    <citation type="journal article" date="2005" name="Genome Biol.">
        <title>Full-length cDNAs from chicken bursal lymphocytes to facilitate gene function analysis.</title>
        <authorList>
            <person name="Caldwell R.B."/>
            <person name="Kierzek A.M."/>
            <person name="Arakawa H."/>
            <person name="Bezzubov Y."/>
            <person name="Zaim J."/>
            <person name="Fiedler P."/>
            <person name="Kutter S."/>
            <person name="Blagodatski A."/>
            <person name="Kostovska D."/>
            <person name="Koter M."/>
            <person name="Plachy J."/>
            <person name="Carninci P."/>
            <person name="Hayashizaki Y."/>
            <person name="Buerstedde J.-M."/>
        </authorList>
    </citation>
    <scope>NUCLEOTIDE SEQUENCE [LARGE SCALE MRNA]</scope>
    <source>
        <strain>CB</strain>
        <tissue>Bursa of Fabricius</tissue>
    </source>
</reference>
<comment type="function">
    <text evidence="1">One HIP oligomer binds the ATPase domains of at least two HSC70 molecules dependent on activation of the HSC70 ATPase by HSP40. Stabilizes the ADP state of HSC70 that has a high affinity for substrate protein. Through its own chaperone activity, it may contribute to the interaction of HSC70 with various target proteins (By similarity).</text>
</comment>
<comment type="subunit">
    <text evidence="1">Homotetramer. Interacts with HSC70 as well as DNAJ homologs and HSP90 (By similarity).</text>
</comment>
<comment type="subcellular location">
    <subcellularLocation>
        <location evidence="1">Cytoplasm</location>
    </subcellularLocation>
</comment>
<comment type="similarity">
    <text evidence="3">Belongs to the FAM10 family.</text>
</comment>
<evidence type="ECO:0000250" key="1"/>
<evidence type="ECO:0000256" key="2">
    <source>
        <dbReference type="SAM" id="MobiDB-lite"/>
    </source>
</evidence>
<evidence type="ECO:0000305" key="3"/>
<dbReference type="EMBL" id="AJ719784">
    <property type="protein sequence ID" value="CAG31443.1"/>
    <property type="molecule type" value="mRNA"/>
</dbReference>
<dbReference type="RefSeq" id="NP_001025928.1">
    <property type="nucleotide sequence ID" value="NM_001030757.1"/>
</dbReference>
<dbReference type="SMR" id="Q5ZLF0"/>
<dbReference type="FunCoup" id="Q5ZLF0">
    <property type="interactions" value="2629"/>
</dbReference>
<dbReference type="STRING" id="9031.ENSGALP00000019569"/>
<dbReference type="PaxDb" id="9031-ENSGALP00000019569"/>
<dbReference type="GeneID" id="418003"/>
<dbReference type="KEGG" id="gga:418003"/>
<dbReference type="CTD" id="144106"/>
<dbReference type="VEuPathDB" id="HostDB:geneid_418003"/>
<dbReference type="eggNOG" id="KOG1308">
    <property type="taxonomic scope" value="Eukaryota"/>
</dbReference>
<dbReference type="InParanoid" id="Q5ZLF0"/>
<dbReference type="OrthoDB" id="533763at2759"/>
<dbReference type="PhylomeDB" id="Q5ZLF0"/>
<dbReference type="PRO" id="PR:Q5ZLF0"/>
<dbReference type="Proteomes" id="UP000000539">
    <property type="component" value="Unassembled WGS sequence"/>
</dbReference>
<dbReference type="GO" id="GO:0005737">
    <property type="term" value="C:cytoplasm"/>
    <property type="evidence" value="ECO:0007669"/>
    <property type="project" value="UniProtKB-SubCell"/>
</dbReference>
<dbReference type="GO" id="GO:0030544">
    <property type="term" value="F:Hsp70 protein binding"/>
    <property type="evidence" value="ECO:0000318"/>
    <property type="project" value="GO_Central"/>
</dbReference>
<dbReference type="GO" id="GO:0046983">
    <property type="term" value="F:protein dimerization activity"/>
    <property type="evidence" value="ECO:0007669"/>
    <property type="project" value="InterPro"/>
</dbReference>
<dbReference type="GO" id="GO:0051085">
    <property type="term" value="P:chaperone cofactor-dependent protein refolding"/>
    <property type="evidence" value="ECO:0000318"/>
    <property type="project" value="GO_Central"/>
</dbReference>
<dbReference type="CDD" id="cd14438">
    <property type="entry name" value="Hip_N"/>
    <property type="match status" value="1"/>
</dbReference>
<dbReference type="FunFam" id="1.10.260.100:FF:000007">
    <property type="entry name" value="hsc70-interacting protein-like isoform X1"/>
    <property type="match status" value="1"/>
</dbReference>
<dbReference type="FunFam" id="1.25.40.10:FF:000080">
    <property type="entry name" value="hsc70-interacting protein-like isoform X1"/>
    <property type="match status" value="1"/>
</dbReference>
<dbReference type="FunFam" id="6.10.250.3420:FF:000001">
    <property type="entry name" value="Hsc70-interacting protein-like protein"/>
    <property type="match status" value="1"/>
</dbReference>
<dbReference type="Gene3D" id="1.10.260.100">
    <property type="match status" value="1"/>
</dbReference>
<dbReference type="Gene3D" id="6.10.250.3420">
    <property type="match status" value="1"/>
</dbReference>
<dbReference type="Gene3D" id="1.25.40.10">
    <property type="entry name" value="Tetratricopeptide repeat domain"/>
    <property type="match status" value="1"/>
</dbReference>
<dbReference type="InterPro" id="IPR034649">
    <property type="entry name" value="Hip_N"/>
</dbReference>
<dbReference type="InterPro" id="IPR041243">
    <property type="entry name" value="STI1/HOP_DP"/>
</dbReference>
<dbReference type="InterPro" id="IPR006636">
    <property type="entry name" value="STI1_HS-bd"/>
</dbReference>
<dbReference type="InterPro" id="IPR011990">
    <property type="entry name" value="TPR-like_helical_dom_sf"/>
</dbReference>
<dbReference type="InterPro" id="IPR019734">
    <property type="entry name" value="TPR_rpt"/>
</dbReference>
<dbReference type="PANTHER" id="PTHR45883">
    <property type="entry name" value="HSC70-INTERACTING PROTEIN"/>
    <property type="match status" value="1"/>
</dbReference>
<dbReference type="PANTHER" id="PTHR45883:SF2">
    <property type="entry name" value="HSC70-INTERACTING PROTEIN"/>
    <property type="match status" value="1"/>
</dbReference>
<dbReference type="Pfam" id="PF18253">
    <property type="entry name" value="HipN"/>
    <property type="match status" value="1"/>
</dbReference>
<dbReference type="Pfam" id="PF17830">
    <property type="entry name" value="STI1-HOP_DP"/>
    <property type="match status" value="1"/>
</dbReference>
<dbReference type="Pfam" id="PF13181">
    <property type="entry name" value="TPR_8"/>
    <property type="match status" value="1"/>
</dbReference>
<dbReference type="SMART" id="SM00727">
    <property type="entry name" value="STI1"/>
    <property type="match status" value="1"/>
</dbReference>
<dbReference type="SMART" id="SM00028">
    <property type="entry name" value="TPR"/>
    <property type="match status" value="3"/>
</dbReference>
<dbReference type="SUPFAM" id="SSF48452">
    <property type="entry name" value="TPR-like"/>
    <property type="match status" value="1"/>
</dbReference>
<dbReference type="PROSITE" id="PS50005">
    <property type="entry name" value="TPR"/>
    <property type="match status" value="3"/>
</dbReference>
<dbReference type="PROSITE" id="PS50293">
    <property type="entry name" value="TPR_REGION"/>
    <property type="match status" value="1"/>
</dbReference>